<organism>
    <name type="scientific">Archaeoglobus fulgidus (strain ATCC 49558 / DSM 4304 / JCM 9628 / NBRC 100126 / VC-16)</name>
    <dbReference type="NCBI Taxonomy" id="224325"/>
    <lineage>
        <taxon>Archaea</taxon>
        <taxon>Methanobacteriati</taxon>
        <taxon>Methanobacteriota</taxon>
        <taxon>Archaeoglobi</taxon>
        <taxon>Archaeoglobales</taxon>
        <taxon>Archaeoglobaceae</taxon>
        <taxon>Archaeoglobus</taxon>
    </lineage>
</organism>
<feature type="chain" id="PRO_0000127931" description="Uncharacterized protein AF_0836">
    <location>
        <begin position="1"/>
        <end position="118"/>
    </location>
</feature>
<feature type="transmembrane region" description="Helical" evidence="1">
    <location>
        <begin position="22"/>
        <end position="44"/>
    </location>
</feature>
<feature type="transmembrane region" description="Helical" evidence="1">
    <location>
        <begin position="54"/>
        <end position="71"/>
    </location>
</feature>
<feature type="transmembrane region" description="Helical" evidence="1">
    <location>
        <begin position="78"/>
        <end position="99"/>
    </location>
</feature>
<proteinExistence type="predicted"/>
<comment type="subcellular location">
    <subcellularLocation>
        <location evidence="2">Cell membrane</location>
        <topology evidence="2">Multi-pass membrane protein</topology>
    </subcellularLocation>
</comment>
<dbReference type="EMBL" id="AE000782">
    <property type="protein sequence ID" value="AAB90420.1"/>
    <property type="molecule type" value="Genomic_DNA"/>
</dbReference>
<dbReference type="PIR" id="D69354">
    <property type="entry name" value="D69354"/>
</dbReference>
<dbReference type="STRING" id="224325.AF_0836"/>
<dbReference type="PaxDb" id="224325-AF_0836"/>
<dbReference type="EnsemblBacteria" id="AAB90420">
    <property type="protein sequence ID" value="AAB90420"/>
    <property type="gene ID" value="AF_0836"/>
</dbReference>
<dbReference type="KEGG" id="afu:AF_0836"/>
<dbReference type="HOGENOM" id="CLU_2067659_0_0_2"/>
<dbReference type="Proteomes" id="UP000002199">
    <property type="component" value="Chromosome"/>
</dbReference>
<dbReference type="GO" id="GO:0005886">
    <property type="term" value="C:plasma membrane"/>
    <property type="evidence" value="ECO:0007669"/>
    <property type="project" value="UniProtKB-SubCell"/>
</dbReference>
<evidence type="ECO:0000255" key="1"/>
<evidence type="ECO:0000305" key="2"/>
<sequence>MEKIKKFLIQLLNMRARNTVDIIASIVGAVIIAAAISALLFSIASFLGFYSKDLSPLVYSIVSLAVIPVLRRNVPKKPILSLLTAFSIPILFLSGVEWLKLVASVLLGYLAASSLKDS</sequence>
<reference key="1">
    <citation type="journal article" date="1997" name="Nature">
        <title>The complete genome sequence of the hyperthermophilic, sulphate-reducing archaeon Archaeoglobus fulgidus.</title>
        <authorList>
            <person name="Klenk H.-P."/>
            <person name="Clayton R.A."/>
            <person name="Tomb J.-F."/>
            <person name="White O."/>
            <person name="Nelson K.E."/>
            <person name="Ketchum K.A."/>
            <person name="Dodson R.J."/>
            <person name="Gwinn M.L."/>
            <person name="Hickey E.K."/>
            <person name="Peterson J.D."/>
            <person name="Richardson D.L."/>
            <person name="Kerlavage A.R."/>
            <person name="Graham D.E."/>
            <person name="Kyrpides N.C."/>
            <person name="Fleischmann R.D."/>
            <person name="Quackenbush J."/>
            <person name="Lee N.H."/>
            <person name="Sutton G.G."/>
            <person name="Gill S.R."/>
            <person name="Kirkness E.F."/>
            <person name="Dougherty B.A."/>
            <person name="McKenney K."/>
            <person name="Adams M.D."/>
            <person name="Loftus B.J."/>
            <person name="Peterson S.N."/>
            <person name="Reich C.I."/>
            <person name="McNeil L.K."/>
            <person name="Badger J.H."/>
            <person name="Glodek A."/>
            <person name="Zhou L."/>
            <person name="Overbeek R."/>
            <person name="Gocayne J.D."/>
            <person name="Weidman J.F."/>
            <person name="McDonald L.A."/>
            <person name="Utterback T.R."/>
            <person name="Cotton M.D."/>
            <person name="Spriggs T."/>
            <person name="Artiach P."/>
            <person name="Kaine B.P."/>
            <person name="Sykes S.M."/>
            <person name="Sadow P.W."/>
            <person name="D'Andrea K.P."/>
            <person name="Bowman C."/>
            <person name="Fujii C."/>
            <person name="Garland S.A."/>
            <person name="Mason T.M."/>
            <person name="Olsen G.J."/>
            <person name="Fraser C.M."/>
            <person name="Smith H.O."/>
            <person name="Woese C.R."/>
            <person name="Venter J.C."/>
        </authorList>
    </citation>
    <scope>NUCLEOTIDE SEQUENCE [LARGE SCALE GENOMIC DNA]</scope>
    <source>
        <strain>ATCC 49558 / DSM 4304 / JCM 9628 / NBRC 100126 / VC-16</strain>
    </source>
</reference>
<gene>
    <name type="ordered locus">AF_0836</name>
</gene>
<accession>O29422</accession>
<name>Y836_ARCFU</name>
<protein>
    <recommendedName>
        <fullName>Uncharacterized protein AF_0836</fullName>
    </recommendedName>
</protein>
<keyword id="KW-1003">Cell membrane</keyword>
<keyword id="KW-0472">Membrane</keyword>
<keyword id="KW-1185">Reference proteome</keyword>
<keyword id="KW-0812">Transmembrane</keyword>
<keyword id="KW-1133">Transmembrane helix</keyword>